<dbReference type="EC" id="6.3.4.5" evidence="1"/>
<dbReference type="EMBL" id="CP000568">
    <property type="protein sequence ID" value="ABN51420.1"/>
    <property type="molecule type" value="Genomic_DNA"/>
</dbReference>
<dbReference type="RefSeq" id="WP_003512250.1">
    <property type="nucleotide sequence ID" value="NC_009012.1"/>
</dbReference>
<dbReference type="SMR" id="A3DBU1"/>
<dbReference type="STRING" id="203119.Cthe_0179"/>
<dbReference type="GeneID" id="35805053"/>
<dbReference type="KEGG" id="cth:Cthe_0179"/>
<dbReference type="eggNOG" id="COG0137">
    <property type="taxonomic scope" value="Bacteria"/>
</dbReference>
<dbReference type="HOGENOM" id="CLU_032784_4_2_9"/>
<dbReference type="OrthoDB" id="9801641at2"/>
<dbReference type="UniPathway" id="UPA00068">
    <property type="reaction ID" value="UER00113"/>
</dbReference>
<dbReference type="Proteomes" id="UP000002145">
    <property type="component" value="Chromosome"/>
</dbReference>
<dbReference type="GO" id="GO:0005737">
    <property type="term" value="C:cytoplasm"/>
    <property type="evidence" value="ECO:0007669"/>
    <property type="project" value="UniProtKB-SubCell"/>
</dbReference>
<dbReference type="GO" id="GO:0004055">
    <property type="term" value="F:argininosuccinate synthase activity"/>
    <property type="evidence" value="ECO:0007669"/>
    <property type="project" value="UniProtKB-UniRule"/>
</dbReference>
<dbReference type="GO" id="GO:0005524">
    <property type="term" value="F:ATP binding"/>
    <property type="evidence" value="ECO:0007669"/>
    <property type="project" value="UniProtKB-UniRule"/>
</dbReference>
<dbReference type="GO" id="GO:0000053">
    <property type="term" value="P:argininosuccinate metabolic process"/>
    <property type="evidence" value="ECO:0007669"/>
    <property type="project" value="TreeGrafter"/>
</dbReference>
<dbReference type="GO" id="GO:0006526">
    <property type="term" value="P:L-arginine biosynthetic process"/>
    <property type="evidence" value="ECO:0007669"/>
    <property type="project" value="UniProtKB-UniRule"/>
</dbReference>
<dbReference type="GO" id="GO:0000050">
    <property type="term" value="P:urea cycle"/>
    <property type="evidence" value="ECO:0007669"/>
    <property type="project" value="TreeGrafter"/>
</dbReference>
<dbReference type="CDD" id="cd01999">
    <property type="entry name" value="ASS"/>
    <property type="match status" value="1"/>
</dbReference>
<dbReference type="FunFam" id="3.40.50.620:FF:000019">
    <property type="entry name" value="Argininosuccinate synthase"/>
    <property type="match status" value="1"/>
</dbReference>
<dbReference type="FunFam" id="3.90.1260.10:FF:000007">
    <property type="entry name" value="Argininosuccinate synthase"/>
    <property type="match status" value="1"/>
</dbReference>
<dbReference type="Gene3D" id="3.90.1260.10">
    <property type="entry name" value="Argininosuccinate synthetase, chain A, domain 2"/>
    <property type="match status" value="1"/>
</dbReference>
<dbReference type="Gene3D" id="3.40.50.620">
    <property type="entry name" value="HUPs"/>
    <property type="match status" value="1"/>
</dbReference>
<dbReference type="Gene3D" id="1.20.5.470">
    <property type="entry name" value="Single helix bin"/>
    <property type="match status" value="1"/>
</dbReference>
<dbReference type="HAMAP" id="MF_00005">
    <property type="entry name" value="Arg_succ_synth_type1"/>
    <property type="match status" value="1"/>
</dbReference>
<dbReference type="InterPro" id="IPR048268">
    <property type="entry name" value="Arginosuc_syn_C"/>
</dbReference>
<dbReference type="InterPro" id="IPR048267">
    <property type="entry name" value="Arginosuc_syn_N"/>
</dbReference>
<dbReference type="InterPro" id="IPR001518">
    <property type="entry name" value="Arginosuc_synth"/>
</dbReference>
<dbReference type="InterPro" id="IPR018223">
    <property type="entry name" value="Arginosuc_synth_CS"/>
</dbReference>
<dbReference type="InterPro" id="IPR023434">
    <property type="entry name" value="Arginosuc_synth_type_1_subfam"/>
</dbReference>
<dbReference type="InterPro" id="IPR024074">
    <property type="entry name" value="AS_cat/multimer_dom_body"/>
</dbReference>
<dbReference type="InterPro" id="IPR014729">
    <property type="entry name" value="Rossmann-like_a/b/a_fold"/>
</dbReference>
<dbReference type="NCBIfam" id="TIGR00032">
    <property type="entry name" value="argG"/>
    <property type="match status" value="1"/>
</dbReference>
<dbReference type="NCBIfam" id="NF001770">
    <property type="entry name" value="PRK00509.1"/>
    <property type="match status" value="1"/>
</dbReference>
<dbReference type="PANTHER" id="PTHR11587">
    <property type="entry name" value="ARGININOSUCCINATE SYNTHASE"/>
    <property type="match status" value="1"/>
</dbReference>
<dbReference type="PANTHER" id="PTHR11587:SF2">
    <property type="entry name" value="ARGININOSUCCINATE SYNTHASE"/>
    <property type="match status" value="1"/>
</dbReference>
<dbReference type="Pfam" id="PF20979">
    <property type="entry name" value="Arginosuc_syn_C"/>
    <property type="match status" value="1"/>
</dbReference>
<dbReference type="Pfam" id="PF00764">
    <property type="entry name" value="Arginosuc_synth"/>
    <property type="match status" value="1"/>
</dbReference>
<dbReference type="SUPFAM" id="SSF52402">
    <property type="entry name" value="Adenine nucleotide alpha hydrolases-like"/>
    <property type="match status" value="1"/>
</dbReference>
<dbReference type="SUPFAM" id="SSF69864">
    <property type="entry name" value="Argininosuccinate synthetase, C-terminal domain"/>
    <property type="match status" value="1"/>
</dbReference>
<dbReference type="PROSITE" id="PS00564">
    <property type="entry name" value="ARGININOSUCCIN_SYN_1"/>
    <property type="match status" value="1"/>
</dbReference>
<dbReference type="PROSITE" id="PS00565">
    <property type="entry name" value="ARGININOSUCCIN_SYN_2"/>
    <property type="match status" value="1"/>
</dbReference>
<gene>
    <name evidence="1" type="primary">argG</name>
    <name type="ordered locus">Cthe_0179</name>
</gene>
<name>ASSY_ACET2</name>
<accession>A3DBU1</accession>
<protein>
    <recommendedName>
        <fullName evidence="1">Argininosuccinate synthase</fullName>
        <ecNumber evidence="1">6.3.4.5</ecNumber>
    </recommendedName>
    <alternativeName>
        <fullName evidence="1">Citrulline--aspartate ligase</fullName>
    </alternativeName>
</protein>
<comment type="catalytic activity">
    <reaction evidence="1">
        <text>L-citrulline + L-aspartate + ATP = 2-(N(omega)-L-arginino)succinate + AMP + diphosphate + H(+)</text>
        <dbReference type="Rhea" id="RHEA:10932"/>
        <dbReference type="ChEBI" id="CHEBI:15378"/>
        <dbReference type="ChEBI" id="CHEBI:29991"/>
        <dbReference type="ChEBI" id="CHEBI:30616"/>
        <dbReference type="ChEBI" id="CHEBI:33019"/>
        <dbReference type="ChEBI" id="CHEBI:57472"/>
        <dbReference type="ChEBI" id="CHEBI:57743"/>
        <dbReference type="ChEBI" id="CHEBI:456215"/>
        <dbReference type="EC" id="6.3.4.5"/>
    </reaction>
</comment>
<comment type="pathway">
    <text evidence="1">Amino-acid biosynthesis; L-arginine biosynthesis; L-arginine from L-ornithine and carbamoyl phosphate: step 2/3.</text>
</comment>
<comment type="subunit">
    <text evidence="1">Homotetramer.</text>
</comment>
<comment type="subcellular location">
    <subcellularLocation>
        <location evidence="1">Cytoplasm</location>
    </subcellularLocation>
</comment>
<comment type="similarity">
    <text evidence="1">Belongs to the argininosuccinate synthase family. Type 1 subfamily.</text>
</comment>
<evidence type="ECO:0000255" key="1">
    <source>
        <dbReference type="HAMAP-Rule" id="MF_00005"/>
    </source>
</evidence>
<reference key="1">
    <citation type="submission" date="2007-02" db="EMBL/GenBank/DDBJ databases">
        <title>Complete sequence of Clostridium thermocellum ATCC 27405.</title>
        <authorList>
            <consortium name="US DOE Joint Genome Institute"/>
            <person name="Copeland A."/>
            <person name="Lucas S."/>
            <person name="Lapidus A."/>
            <person name="Barry K."/>
            <person name="Detter J.C."/>
            <person name="Glavina del Rio T."/>
            <person name="Hammon N."/>
            <person name="Israni S."/>
            <person name="Dalin E."/>
            <person name="Tice H."/>
            <person name="Pitluck S."/>
            <person name="Chertkov O."/>
            <person name="Brettin T."/>
            <person name="Bruce D."/>
            <person name="Han C."/>
            <person name="Tapia R."/>
            <person name="Gilna P."/>
            <person name="Schmutz J."/>
            <person name="Larimer F."/>
            <person name="Land M."/>
            <person name="Hauser L."/>
            <person name="Kyrpides N."/>
            <person name="Mikhailova N."/>
            <person name="Wu J.H.D."/>
            <person name="Newcomb M."/>
            <person name="Richardson P."/>
        </authorList>
    </citation>
    <scope>NUCLEOTIDE SEQUENCE [LARGE SCALE GENOMIC DNA]</scope>
    <source>
        <strain>ATCC 27405 / DSM 1237 / JCM 9322 / NBRC 103400 / NCIMB 10682 / NRRL B-4536 / VPI 7372</strain>
    </source>
</reference>
<keyword id="KW-0028">Amino-acid biosynthesis</keyword>
<keyword id="KW-0055">Arginine biosynthesis</keyword>
<keyword id="KW-0067">ATP-binding</keyword>
<keyword id="KW-0963">Cytoplasm</keyword>
<keyword id="KW-0436">Ligase</keyword>
<keyword id="KW-0547">Nucleotide-binding</keyword>
<keyword id="KW-1185">Reference proteome</keyword>
<proteinExistence type="inferred from homology"/>
<feature type="chain" id="PRO_0000321309" description="Argininosuccinate synthase">
    <location>
        <begin position="1"/>
        <end position="405"/>
    </location>
</feature>
<feature type="binding site" evidence="1">
    <location>
        <begin position="10"/>
        <end position="18"/>
    </location>
    <ligand>
        <name>ATP</name>
        <dbReference type="ChEBI" id="CHEBI:30616"/>
    </ligand>
</feature>
<feature type="binding site" evidence="1">
    <location>
        <position position="37"/>
    </location>
    <ligand>
        <name>ATP</name>
        <dbReference type="ChEBI" id="CHEBI:30616"/>
    </ligand>
</feature>
<feature type="binding site" evidence="1">
    <location>
        <position position="88"/>
    </location>
    <ligand>
        <name>L-citrulline</name>
        <dbReference type="ChEBI" id="CHEBI:57743"/>
    </ligand>
</feature>
<feature type="binding site" evidence="1">
    <location>
        <position position="93"/>
    </location>
    <ligand>
        <name>L-citrulline</name>
        <dbReference type="ChEBI" id="CHEBI:57743"/>
    </ligand>
</feature>
<feature type="binding site" evidence="1">
    <location>
        <position position="118"/>
    </location>
    <ligand>
        <name>ATP</name>
        <dbReference type="ChEBI" id="CHEBI:30616"/>
    </ligand>
</feature>
<feature type="binding site" evidence="1">
    <location>
        <position position="120"/>
    </location>
    <ligand>
        <name>L-aspartate</name>
        <dbReference type="ChEBI" id="CHEBI:29991"/>
    </ligand>
</feature>
<feature type="binding site" evidence="1">
    <location>
        <position position="124"/>
    </location>
    <ligand>
        <name>L-aspartate</name>
        <dbReference type="ChEBI" id="CHEBI:29991"/>
    </ligand>
</feature>
<feature type="binding site" evidence="1">
    <location>
        <position position="124"/>
    </location>
    <ligand>
        <name>L-citrulline</name>
        <dbReference type="ChEBI" id="CHEBI:57743"/>
    </ligand>
</feature>
<feature type="binding site" evidence="1">
    <location>
        <position position="125"/>
    </location>
    <ligand>
        <name>L-aspartate</name>
        <dbReference type="ChEBI" id="CHEBI:29991"/>
    </ligand>
</feature>
<feature type="binding site" evidence="1">
    <location>
        <position position="128"/>
    </location>
    <ligand>
        <name>L-citrulline</name>
        <dbReference type="ChEBI" id="CHEBI:57743"/>
    </ligand>
</feature>
<feature type="binding site" evidence="1">
    <location>
        <position position="177"/>
    </location>
    <ligand>
        <name>L-citrulline</name>
        <dbReference type="ChEBI" id="CHEBI:57743"/>
    </ligand>
</feature>
<feature type="binding site" evidence="1">
    <location>
        <position position="186"/>
    </location>
    <ligand>
        <name>L-citrulline</name>
        <dbReference type="ChEBI" id="CHEBI:57743"/>
    </ligand>
</feature>
<feature type="binding site" evidence="1">
    <location>
        <position position="263"/>
    </location>
    <ligand>
        <name>L-citrulline</name>
        <dbReference type="ChEBI" id="CHEBI:57743"/>
    </ligand>
</feature>
<feature type="binding site" evidence="1">
    <location>
        <position position="275"/>
    </location>
    <ligand>
        <name>L-citrulline</name>
        <dbReference type="ChEBI" id="CHEBI:57743"/>
    </ligand>
</feature>
<organism>
    <name type="scientific">Acetivibrio thermocellus (strain ATCC 27405 / DSM 1237 / JCM 9322 / NBRC 103400 / NCIMB 10682 / NRRL B-4536 / VPI 7372)</name>
    <name type="common">Clostridium thermocellum</name>
    <dbReference type="NCBI Taxonomy" id="203119"/>
    <lineage>
        <taxon>Bacteria</taxon>
        <taxon>Bacillati</taxon>
        <taxon>Bacillota</taxon>
        <taxon>Clostridia</taxon>
        <taxon>Eubacteriales</taxon>
        <taxon>Oscillospiraceae</taxon>
        <taxon>Acetivibrio</taxon>
    </lineage>
</organism>
<sequence length="405" mass="45622">MSQKEKVILAYSGGLDTSIIIPWLKENYDYEVIAMAADVGQGEELEPLREKAIKTGASKIYIEDLKEEFVTDFIFPTLKAGAVYEGKYLLGTSFARPLIAKRMVEIALKEGATAVAHGATGKGNDQVRFELTVKALAPHLKIIAPWRIWDIKSREDEIEYAQARNIPIPVSKEDNYSMDRNLWHLSHEGLDLEDPWNEPQYDKILKLMVPPEKAPDKPTYVEIYFEKGIPKKVNGVEYGPVELIEVLNKIGGENGIGIVDIVENRLVGMKSRGVYETPGGTILYAAHRELELLCLDRDTLHYKDLVAQRFAELVYYGQWYTPLREAISAFVDVTQETVTGTVRLKLYKGNIISAGAKSDYSLYSEELSTFGEDNVYNQKDAEGFINLFGLPMKVQALMKEKNKGK</sequence>